<feature type="chain" id="PRO_0000130240" description="Small ribosomal subunit protein uS3">
    <location>
        <begin position="1"/>
        <end position="239"/>
    </location>
</feature>
<feature type="domain" description="KH type-2" evidence="1">
    <location>
        <begin position="39"/>
        <end position="107"/>
    </location>
</feature>
<feature type="region of interest" description="Disordered" evidence="2">
    <location>
        <begin position="214"/>
        <end position="239"/>
    </location>
</feature>
<feature type="compositionally biased region" description="Basic and acidic residues" evidence="2">
    <location>
        <begin position="216"/>
        <end position="239"/>
    </location>
</feature>
<name>RS3_XYLFT</name>
<evidence type="ECO:0000255" key="1">
    <source>
        <dbReference type="HAMAP-Rule" id="MF_01309"/>
    </source>
</evidence>
<evidence type="ECO:0000256" key="2">
    <source>
        <dbReference type="SAM" id="MobiDB-lite"/>
    </source>
</evidence>
<evidence type="ECO:0000305" key="3"/>
<keyword id="KW-1185">Reference proteome</keyword>
<keyword id="KW-0687">Ribonucleoprotein</keyword>
<keyword id="KW-0689">Ribosomal protein</keyword>
<keyword id="KW-0694">RNA-binding</keyword>
<keyword id="KW-0699">rRNA-binding</keyword>
<accession>Q87E76</accession>
<sequence>MGHKVHPIGIRLGISADWNSKWYANKAEFARYLAADLKVRQVLRKKMSQAGISKILIERPSNTACVSMHVARPGVVIGKRGEDIEMLRKQVSDIMGVPVHINVIEVRKPELDAQLVAESVAQQLERRIMFRRAMKRSVSNAIRLGALGIKISVAGRLNGAEIARSEWYREGRVPLQTLRADIGYGFSEAYTNYGVTGVKVLMYHGDIFSFSSVSQEKQDDGSRGDRNADRSSRRSREVR</sequence>
<proteinExistence type="inferred from homology"/>
<organism>
    <name type="scientific">Xylella fastidiosa (strain Temecula1 / ATCC 700964)</name>
    <dbReference type="NCBI Taxonomy" id="183190"/>
    <lineage>
        <taxon>Bacteria</taxon>
        <taxon>Pseudomonadati</taxon>
        <taxon>Pseudomonadota</taxon>
        <taxon>Gammaproteobacteria</taxon>
        <taxon>Lysobacterales</taxon>
        <taxon>Lysobacteraceae</taxon>
        <taxon>Xylella</taxon>
    </lineage>
</organism>
<reference key="1">
    <citation type="journal article" date="2003" name="J. Bacteriol.">
        <title>Comparative analyses of the complete genome sequences of Pierce's disease and citrus variegated chlorosis strains of Xylella fastidiosa.</title>
        <authorList>
            <person name="Van Sluys M.A."/>
            <person name="de Oliveira M.C."/>
            <person name="Monteiro-Vitorello C.B."/>
            <person name="Miyaki C.Y."/>
            <person name="Furlan L.R."/>
            <person name="Camargo L.E.A."/>
            <person name="da Silva A.C.R."/>
            <person name="Moon D.H."/>
            <person name="Takita M.A."/>
            <person name="Lemos E.G.M."/>
            <person name="Machado M.A."/>
            <person name="Ferro M.I.T."/>
            <person name="da Silva F.R."/>
            <person name="Goldman M.H.S."/>
            <person name="Goldman G.H."/>
            <person name="Lemos M.V.F."/>
            <person name="El-Dorry H."/>
            <person name="Tsai S.M."/>
            <person name="Carrer H."/>
            <person name="Carraro D.M."/>
            <person name="de Oliveira R.C."/>
            <person name="Nunes L.R."/>
            <person name="Siqueira W.J."/>
            <person name="Coutinho L.L."/>
            <person name="Kimura E.T."/>
            <person name="Ferro E.S."/>
            <person name="Harakava R."/>
            <person name="Kuramae E.E."/>
            <person name="Marino C.L."/>
            <person name="Giglioti E."/>
            <person name="Abreu I.L."/>
            <person name="Alves L.M.C."/>
            <person name="do Amaral A.M."/>
            <person name="Baia G.S."/>
            <person name="Blanco S.R."/>
            <person name="Brito M.S."/>
            <person name="Cannavan F.S."/>
            <person name="Celestino A.V."/>
            <person name="da Cunha A.F."/>
            <person name="Fenille R.C."/>
            <person name="Ferro J.A."/>
            <person name="Formighieri E.F."/>
            <person name="Kishi L.T."/>
            <person name="Leoni S.G."/>
            <person name="Oliveira A.R."/>
            <person name="Rosa V.E. Jr."/>
            <person name="Sassaki F.T."/>
            <person name="Sena J.A.D."/>
            <person name="de Souza A.A."/>
            <person name="Truffi D."/>
            <person name="Tsukumo F."/>
            <person name="Yanai G.M."/>
            <person name="Zaros L.G."/>
            <person name="Civerolo E.L."/>
            <person name="Simpson A.J.G."/>
            <person name="Almeida N.F. Jr."/>
            <person name="Setubal J.C."/>
            <person name="Kitajima J.P."/>
        </authorList>
    </citation>
    <scope>NUCLEOTIDE SEQUENCE [LARGE SCALE GENOMIC DNA]</scope>
    <source>
        <strain>Temecula1 / ATCC 700964</strain>
    </source>
</reference>
<protein>
    <recommendedName>
        <fullName evidence="1">Small ribosomal subunit protein uS3</fullName>
    </recommendedName>
    <alternativeName>
        <fullName evidence="3">30S ribosomal protein S3</fullName>
    </alternativeName>
</protein>
<comment type="function">
    <text evidence="1">Binds the lower part of the 30S subunit head. Binds mRNA in the 70S ribosome, positioning it for translation.</text>
</comment>
<comment type="subunit">
    <text evidence="1">Part of the 30S ribosomal subunit. Forms a tight complex with proteins S10 and S14.</text>
</comment>
<comment type="similarity">
    <text evidence="1">Belongs to the universal ribosomal protein uS3 family.</text>
</comment>
<dbReference type="EMBL" id="AE009442">
    <property type="protein sequence ID" value="AAO28322.1"/>
    <property type="molecule type" value="Genomic_DNA"/>
</dbReference>
<dbReference type="RefSeq" id="WP_004090104.1">
    <property type="nucleotide sequence ID" value="NC_004556.1"/>
</dbReference>
<dbReference type="SMR" id="Q87E76"/>
<dbReference type="GeneID" id="93904145"/>
<dbReference type="KEGG" id="xft:PD_0443"/>
<dbReference type="HOGENOM" id="CLU_058591_0_2_6"/>
<dbReference type="Proteomes" id="UP000002516">
    <property type="component" value="Chromosome"/>
</dbReference>
<dbReference type="GO" id="GO:0022627">
    <property type="term" value="C:cytosolic small ribosomal subunit"/>
    <property type="evidence" value="ECO:0007669"/>
    <property type="project" value="TreeGrafter"/>
</dbReference>
<dbReference type="GO" id="GO:0003729">
    <property type="term" value="F:mRNA binding"/>
    <property type="evidence" value="ECO:0007669"/>
    <property type="project" value="UniProtKB-UniRule"/>
</dbReference>
<dbReference type="GO" id="GO:0019843">
    <property type="term" value="F:rRNA binding"/>
    <property type="evidence" value="ECO:0007669"/>
    <property type="project" value="UniProtKB-UniRule"/>
</dbReference>
<dbReference type="GO" id="GO:0003735">
    <property type="term" value="F:structural constituent of ribosome"/>
    <property type="evidence" value="ECO:0007669"/>
    <property type="project" value="InterPro"/>
</dbReference>
<dbReference type="GO" id="GO:0006412">
    <property type="term" value="P:translation"/>
    <property type="evidence" value="ECO:0007669"/>
    <property type="project" value="UniProtKB-UniRule"/>
</dbReference>
<dbReference type="CDD" id="cd02412">
    <property type="entry name" value="KH-II_30S_S3"/>
    <property type="match status" value="1"/>
</dbReference>
<dbReference type="FunFam" id="3.30.300.20:FF:000001">
    <property type="entry name" value="30S ribosomal protein S3"/>
    <property type="match status" value="1"/>
</dbReference>
<dbReference type="Gene3D" id="3.30.300.20">
    <property type="match status" value="1"/>
</dbReference>
<dbReference type="Gene3D" id="3.30.1140.32">
    <property type="entry name" value="Ribosomal protein S3, C-terminal domain"/>
    <property type="match status" value="1"/>
</dbReference>
<dbReference type="HAMAP" id="MF_01309_B">
    <property type="entry name" value="Ribosomal_uS3_B"/>
    <property type="match status" value="1"/>
</dbReference>
<dbReference type="InterPro" id="IPR004087">
    <property type="entry name" value="KH_dom"/>
</dbReference>
<dbReference type="InterPro" id="IPR015946">
    <property type="entry name" value="KH_dom-like_a/b"/>
</dbReference>
<dbReference type="InterPro" id="IPR004044">
    <property type="entry name" value="KH_dom_type_2"/>
</dbReference>
<dbReference type="InterPro" id="IPR009019">
    <property type="entry name" value="KH_sf_prok-type"/>
</dbReference>
<dbReference type="InterPro" id="IPR036419">
    <property type="entry name" value="Ribosomal_S3_C_sf"/>
</dbReference>
<dbReference type="InterPro" id="IPR005704">
    <property type="entry name" value="Ribosomal_uS3_bac-typ"/>
</dbReference>
<dbReference type="InterPro" id="IPR001351">
    <property type="entry name" value="Ribosomal_uS3_C"/>
</dbReference>
<dbReference type="NCBIfam" id="TIGR01009">
    <property type="entry name" value="rpsC_bact"/>
    <property type="match status" value="1"/>
</dbReference>
<dbReference type="PANTHER" id="PTHR11760">
    <property type="entry name" value="30S/40S RIBOSOMAL PROTEIN S3"/>
    <property type="match status" value="1"/>
</dbReference>
<dbReference type="PANTHER" id="PTHR11760:SF19">
    <property type="entry name" value="SMALL RIBOSOMAL SUBUNIT PROTEIN US3C"/>
    <property type="match status" value="1"/>
</dbReference>
<dbReference type="Pfam" id="PF07650">
    <property type="entry name" value="KH_2"/>
    <property type="match status" value="1"/>
</dbReference>
<dbReference type="Pfam" id="PF00189">
    <property type="entry name" value="Ribosomal_S3_C"/>
    <property type="match status" value="1"/>
</dbReference>
<dbReference type="SMART" id="SM00322">
    <property type="entry name" value="KH"/>
    <property type="match status" value="1"/>
</dbReference>
<dbReference type="SUPFAM" id="SSF54814">
    <property type="entry name" value="Prokaryotic type KH domain (KH-domain type II)"/>
    <property type="match status" value="1"/>
</dbReference>
<dbReference type="SUPFAM" id="SSF54821">
    <property type="entry name" value="Ribosomal protein S3 C-terminal domain"/>
    <property type="match status" value="1"/>
</dbReference>
<dbReference type="PROSITE" id="PS50823">
    <property type="entry name" value="KH_TYPE_2"/>
    <property type="match status" value="1"/>
</dbReference>
<gene>
    <name evidence="1" type="primary">rpsC</name>
    <name type="ordered locus">PD_0443</name>
</gene>